<dbReference type="EMBL" id="CP001079">
    <property type="protein sequence ID" value="ACM49514.1"/>
    <property type="molecule type" value="Genomic_DNA"/>
</dbReference>
<dbReference type="RefSeq" id="WP_012659043.1">
    <property type="nucleotide sequence ID" value="NC_012026.1"/>
</dbReference>
<dbReference type="SMR" id="B9KJ52"/>
<dbReference type="STRING" id="320483.AMF_678"/>
<dbReference type="GeneID" id="7397860"/>
<dbReference type="KEGG" id="amf:AMF_678"/>
<dbReference type="PATRIC" id="fig|320483.3.peg.771"/>
<dbReference type="eggNOG" id="COG0200">
    <property type="taxonomic scope" value="Bacteria"/>
</dbReference>
<dbReference type="HOGENOM" id="CLU_055188_4_0_5"/>
<dbReference type="Proteomes" id="UP000007307">
    <property type="component" value="Chromosome"/>
</dbReference>
<dbReference type="GO" id="GO:0015934">
    <property type="term" value="C:large ribosomal subunit"/>
    <property type="evidence" value="ECO:0007669"/>
    <property type="project" value="InterPro"/>
</dbReference>
<dbReference type="GO" id="GO:0019843">
    <property type="term" value="F:rRNA binding"/>
    <property type="evidence" value="ECO:0007669"/>
    <property type="project" value="UniProtKB-UniRule"/>
</dbReference>
<dbReference type="GO" id="GO:0003735">
    <property type="term" value="F:structural constituent of ribosome"/>
    <property type="evidence" value="ECO:0007669"/>
    <property type="project" value="InterPro"/>
</dbReference>
<dbReference type="GO" id="GO:0006412">
    <property type="term" value="P:translation"/>
    <property type="evidence" value="ECO:0007669"/>
    <property type="project" value="UniProtKB-UniRule"/>
</dbReference>
<dbReference type="Gene3D" id="3.100.10.10">
    <property type="match status" value="1"/>
</dbReference>
<dbReference type="HAMAP" id="MF_01341">
    <property type="entry name" value="Ribosomal_uL15"/>
    <property type="match status" value="1"/>
</dbReference>
<dbReference type="InterPro" id="IPR030878">
    <property type="entry name" value="Ribosomal_uL15"/>
</dbReference>
<dbReference type="InterPro" id="IPR021131">
    <property type="entry name" value="Ribosomal_uL15/eL18"/>
</dbReference>
<dbReference type="InterPro" id="IPR036227">
    <property type="entry name" value="Ribosomal_uL15/eL18_sf"/>
</dbReference>
<dbReference type="InterPro" id="IPR005749">
    <property type="entry name" value="Ribosomal_uL15_bac-type"/>
</dbReference>
<dbReference type="NCBIfam" id="TIGR01071">
    <property type="entry name" value="rplO_bact"/>
    <property type="match status" value="1"/>
</dbReference>
<dbReference type="PANTHER" id="PTHR12934">
    <property type="entry name" value="50S RIBOSOMAL PROTEIN L15"/>
    <property type="match status" value="1"/>
</dbReference>
<dbReference type="PANTHER" id="PTHR12934:SF11">
    <property type="entry name" value="LARGE RIBOSOMAL SUBUNIT PROTEIN UL15M"/>
    <property type="match status" value="1"/>
</dbReference>
<dbReference type="Pfam" id="PF00828">
    <property type="entry name" value="Ribosomal_L27A"/>
    <property type="match status" value="1"/>
</dbReference>
<dbReference type="SUPFAM" id="SSF52080">
    <property type="entry name" value="Ribosomal proteins L15p and L18e"/>
    <property type="match status" value="1"/>
</dbReference>
<gene>
    <name evidence="1" type="primary">rplO</name>
    <name type="ordered locus">AMF_678</name>
</gene>
<keyword id="KW-1185">Reference proteome</keyword>
<keyword id="KW-0687">Ribonucleoprotein</keyword>
<keyword id="KW-0689">Ribosomal protein</keyword>
<keyword id="KW-0694">RNA-binding</keyword>
<keyword id="KW-0699">rRNA-binding</keyword>
<reference key="1">
    <citation type="journal article" date="2009" name="BMC Genomics">
        <title>Conservation in the face of diversity: multistrain analysis of an intracellular bacterium.</title>
        <authorList>
            <person name="Dark M.J."/>
            <person name="Herndon D.R."/>
            <person name="Kappmeyer L.S."/>
            <person name="Gonzales M.P."/>
            <person name="Nordeen E."/>
            <person name="Palmer G.H."/>
            <person name="Knowles D.P. Jr."/>
            <person name="Brayton K.A."/>
        </authorList>
    </citation>
    <scope>NUCLEOTIDE SEQUENCE [LARGE SCALE GENOMIC DNA]</scope>
    <source>
        <strain>Florida</strain>
    </source>
</reference>
<proteinExistence type="inferred from homology"/>
<sequence>MKLNELFAGLPKRRRLKVLGRGLGCGKGKTSGRGHKGQKARSGCAVNGFEGGQQPIFTRLPKRGFRSMSRARYEIVNIGALQRLISEKKIVDASNISKELMAELGMIPSPMSKVKILGKGALKAKVGISYDAVSKAAWEESLLTEGLSDS</sequence>
<protein>
    <recommendedName>
        <fullName evidence="1">Large ribosomal subunit protein uL15</fullName>
    </recommendedName>
    <alternativeName>
        <fullName evidence="2">50S ribosomal protein L15</fullName>
    </alternativeName>
</protein>
<feature type="chain" id="PRO_1000166270" description="Large ribosomal subunit protein uL15">
    <location>
        <begin position="1"/>
        <end position="150"/>
    </location>
</feature>
<organism>
    <name type="scientific">Anaplasma marginale (strain Florida)</name>
    <dbReference type="NCBI Taxonomy" id="320483"/>
    <lineage>
        <taxon>Bacteria</taxon>
        <taxon>Pseudomonadati</taxon>
        <taxon>Pseudomonadota</taxon>
        <taxon>Alphaproteobacteria</taxon>
        <taxon>Rickettsiales</taxon>
        <taxon>Anaplasmataceae</taxon>
        <taxon>Anaplasma</taxon>
    </lineage>
</organism>
<comment type="function">
    <text evidence="1">Binds to the 23S rRNA.</text>
</comment>
<comment type="subunit">
    <text evidence="1">Part of the 50S ribosomal subunit.</text>
</comment>
<comment type="similarity">
    <text evidence="1">Belongs to the universal ribosomal protein uL15 family.</text>
</comment>
<name>RL15_ANAMF</name>
<accession>B9KJ52</accession>
<evidence type="ECO:0000255" key="1">
    <source>
        <dbReference type="HAMAP-Rule" id="MF_01341"/>
    </source>
</evidence>
<evidence type="ECO:0000305" key="2"/>